<proteinExistence type="inferred from homology"/>
<comment type="function">
    <text evidence="1">Excises uracil residues from the DNA which can arise as a result of misincorporation of dUMP residues by DNA polymerase or due to deamination of cytosine.</text>
</comment>
<comment type="catalytic activity">
    <reaction evidence="1">
        <text>Hydrolyzes single-stranded DNA or mismatched double-stranded DNA and polynucleotides, releasing free uracil.</text>
        <dbReference type="EC" id="3.2.2.27"/>
    </reaction>
</comment>
<comment type="subcellular location">
    <subcellularLocation>
        <location evidence="1">Cytoplasm</location>
    </subcellularLocation>
</comment>
<comment type="similarity">
    <text evidence="1">Belongs to the uracil-DNA glycosylase (UDG) superfamily. UNG family.</text>
</comment>
<feature type="chain" id="PRO_1000009910" description="Uracil-DNA glycosylase">
    <location>
        <begin position="1"/>
        <end position="227"/>
    </location>
</feature>
<feature type="active site" description="Proton acceptor" evidence="1">
    <location>
        <position position="68"/>
    </location>
</feature>
<sequence>MTARPLSELVEPGWARALQPVAEQVARMGQFLRAEIAAGRRYLPAGPNVLRAFTYPFDEVKVLIVGQDPYPTPGHAVGLSFSVAPDVSPLPRSLANIFQEYTADLGHPPPSCGDLTPWAQRGVLLLNRVLTVRPSNPASHRGKGWEPVTECAIRALTARQQPLVAILWGRDASTLKPILAQGNCVAIESPHPSPLSASRGFFGSRPFSRANKLLAEMGADEIDWRLP</sequence>
<reference key="1">
    <citation type="submission" date="2006-10" db="EMBL/GenBank/DDBJ databases">
        <authorList>
            <person name="Fleischmann R.D."/>
            <person name="Dodson R.J."/>
            <person name="Haft D.H."/>
            <person name="Merkel J.S."/>
            <person name="Nelson W.C."/>
            <person name="Fraser C.M."/>
        </authorList>
    </citation>
    <scope>NUCLEOTIDE SEQUENCE [LARGE SCALE GENOMIC DNA]</scope>
    <source>
        <strain>104</strain>
    </source>
</reference>
<keyword id="KW-0963">Cytoplasm</keyword>
<keyword id="KW-0227">DNA damage</keyword>
<keyword id="KW-0234">DNA repair</keyword>
<keyword id="KW-0378">Hydrolase</keyword>
<organism>
    <name type="scientific">Mycobacterium avium (strain 104)</name>
    <dbReference type="NCBI Taxonomy" id="243243"/>
    <lineage>
        <taxon>Bacteria</taxon>
        <taxon>Bacillati</taxon>
        <taxon>Actinomycetota</taxon>
        <taxon>Actinomycetes</taxon>
        <taxon>Mycobacteriales</taxon>
        <taxon>Mycobacteriaceae</taxon>
        <taxon>Mycobacterium</taxon>
        <taxon>Mycobacterium avium complex (MAC)</taxon>
    </lineage>
</organism>
<name>UNG_MYCA1</name>
<protein>
    <recommendedName>
        <fullName evidence="1">Uracil-DNA glycosylase</fullName>
        <shortName evidence="1">UDG</shortName>
        <ecNumber evidence="1">3.2.2.27</ecNumber>
    </recommendedName>
</protein>
<dbReference type="EC" id="3.2.2.27" evidence="1"/>
<dbReference type="EMBL" id="CP000479">
    <property type="protein sequence ID" value="ABK67769.1"/>
    <property type="molecule type" value="Genomic_DNA"/>
</dbReference>
<dbReference type="RefSeq" id="WP_011725701.1">
    <property type="nucleotide sequence ID" value="NC_008595.1"/>
</dbReference>
<dbReference type="SMR" id="A0QJA9"/>
<dbReference type="KEGG" id="mav:MAV_3828"/>
<dbReference type="HOGENOM" id="CLU_032162_3_1_11"/>
<dbReference type="Proteomes" id="UP000001574">
    <property type="component" value="Chromosome"/>
</dbReference>
<dbReference type="GO" id="GO:0005737">
    <property type="term" value="C:cytoplasm"/>
    <property type="evidence" value="ECO:0007669"/>
    <property type="project" value="UniProtKB-SubCell"/>
</dbReference>
<dbReference type="GO" id="GO:0004844">
    <property type="term" value="F:uracil DNA N-glycosylase activity"/>
    <property type="evidence" value="ECO:0007669"/>
    <property type="project" value="UniProtKB-UniRule"/>
</dbReference>
<dbReference type="GO" id="GO:0097510">
    <property type="term" value="P:base-excision repair, AP site formation via deaminated base removal"/>
    <property type="evidence" value="ECO:0007669"/>
    <property type="project" value="TreeGrafter"/>
</dbReference>
<dbReference type="CDD" id="cd10027">
    <property type="entry name" value="UDG-F1-like"/>
    <property type="match status" value="1"/>
</dbReference>
<dbReference type="FunFam" id="3.40.470.10:FF:000006">
    <property type="entry name" value="Uracil-DNA glycosylase"/>
    <property type="match status" value="1"/>
</dbReference>
<dbReference type="Gene3D" id="3.40.470.10">
    <property type="entry name" value="Uracil-DNA glycosylase-like domain"/>
    <property type="match status" value="1"/>
</dbReference>
<dbReference type="HAMAP" id="MF_00148">
    <property type="entry name" value="UDG"/>
    <property type="match status" value="1"/>
</dbReference>
<dbReference type="InterPro" id="IPR002043">
    <property type="entry name" value="UDG_fam1"/>
</dbReference>
<dbReference type="InterPro" id="IPR018085">
    <property type="entry name" value="Ura-DNA_Glyclase_AS"/>
</dbReference>
<dbReference type="InterPro" id="IPR005122">
    <property type="entry name" value="Uracil-DNA_glycosylase-like"/>
</dbReference>
<dbReference type="InterPro" id="IPR036895">
    <property type="entry name" value="Uracil-DNA_glycosylase-like_sf"/>
</dbReference>
<dbReference type="NCBIfam" id="NF003588">
    <property type="entry name" value="PRK05254.1-1"/>
    <property type="match status" value="1"/>
</dbReference>
<dbReference type="NCBIfam" id="NF003592">
    <property type="entry name" value="PRK05254.1-5"/>
    <property type="match status" value="1"/>
</dbReference>
<dbReference type="NCBIfam" id="TIGR00628">
    <property type="entry name" value="ung"/>
    <property type="match status" value="1"/>
</dbReference>
<dbReference type="PANTHER" id="PTHR11264">
    <property type="entry name" value="URACIL-DNA GLYCOSYLASE"/>
    <property type="match status" value="1"/>
</dbReference>
<dbReference type="PANTHER" id="PTHR11264:SF0">
    <property type="entry name" value="URACIL-DNA GLYCOSYLASE"/>
    <property type="match status" value="1"/>
</dbReference>
<dbReference type="Pfam" id="PF03167">
    <property type="entry name" value="UDG"/>
    <property type="match status" value="1"/>
</dbReference>
<dbReference type="SMART" id="SM00986">
    <property type="entry name" value="UDG"/>
    <property type="match status" value="1"/>
</dbReference>
<dbReference type="SMART" id="SM00987">
    <property type="entry name" value="UreE_C"/>
    <property type="match status" value="1"/>
</dbReference>
<dbReference type="SUPFAM" id="SSF52141">
    <property type="entry name" value="Uracil-DNA glycosylase-like"/>
    <property type="match status" value="1"/>
</dbReference>
<dbReference type="PROSITE" id="PS00130">
    <property type="entry name" value="U_DNA_GLYCOSYLASE"/>
    <property type="match status" value="1"/>
</dbReference>
<gene>
    <name evidence="1" type="primary">ung</name>
    <name type="ordered locus">MAV_3828</name>
</gene>
<accession>A0QJA9</accession>
<evidence type="ECO:0000255" key="1">
    <source>
        <dbReference type="HAMAP-Rule" id="MF_00148"/>
    </source>
</evidence>